<protein>
    <recommendedName>
        <fullName evidence="1">Putative 4-diphosphocytidyl-2-C-methyl-D-erythritol kinase</fullName>
        <shortName evidence="1">CMK</shortName>
        <ecNumber evidence="1">2.7.1.148</ecNumber>
    </recommendedName>
    <alternativeName>
        <fullName evidence="1">4-(cytidine-5'-diphospho)-2-C-methyl-D-erythritol kinase</fullName>
    </alternativeName>
</protein>
<evidence type="ECO:0000255" key="1">
    <source>
        <dbReference type="HAMAP-Rule" id="MF_00061"/>
    </source>
</evidence>
<dbReference type="EC" id="2.7.1.148" evidence="1"/>
<dbReference type="EMBL" id="AP006716">
    <property type="protein sequence ID" value="BAE05825.1"/>
    <property type="molecule type" value="Genomic_DNA"/>
</dbReference>
<dbReference type="SMR" id="Q4L3F2"/>
<dbReference type="KEGG" id="sha:SH2516"/>
<dbReference type="eggNOG" id="COG1947">
    <property type="taxonomic scope" value="Bacteria"/>
</dbReference>
<dbReference type="HOGENOM" id="CLU_053057_1_1_9"/>
<dbReference type="OrthoDB" id="9809438at2"/>
<dbReference type="Proteomes" id="UP000000543">
    <property type="component" value="Chromosome"/>
</dbReference>
<dbReference type="GO" id="GO:0050515">
    <property type="term" value="F:4-(cytidine 5'-diphospho)-2-C-methyl-D-erythritol kinase activity"/>
    <property type="evidence" value="ECO:0007669"/>
    <property type="project" value="UniProtKB-UniRule"/>
</dbReference>
<dbReference type="GO" id="GO:0005524">
    <property type="term" value="F:ATP binding"/>
    <property type="evidence" value="ECO:0007669"/>
    <property type="project" value="UniProtKB-UniRule"/>
</dbReference>
<dbReference type="GO" id="GO:0016114">
    <property type="term" value="P:terpenoid biosynthetic process"/>
    <property type="evidence" value="ECO:0007669"/>
    <property type="project" value="InterPro"/>
</dbReference>
<dbReference type="FunFam" id="3.30.230.10:FF:000029">
    <property type="entry name" value="4-diphosphocytidyl-2-C-methyl-D-erythritol kinase"/>
    <property type="match status" value="1"/>
</dbReference>
<dbReference type="FunFam" id="3.30.70.890:FF:000006">
    <property type="entry name" value="4-diphosphocytidyl-2-C-methyl-D-erythritol kinase"/>
    <property type="match status" value="1"/>
</dbReference>
<dbReference type="Gene3D" id="3.30.230.10">
    <property type="match status" value="1"/>
</dbReference>
<dbReference type="Gene3D" id="3.30.70.890">
    <property type="entry name" value="GHMP kinase, C-terminal domain"/>
    <property type="match status" value="1"/>
</dbReference>
<dbReference type="HAMAP" id="MF_00061">
    <property type="entry name" value="IspE"/>
    <property type="match status" value="1"/>
</dbReference>
<dbReference type="InterPro" id="IPR013750">
    <property type="entry name" value="GHMP_kinase_C_dom"/>
</dbReference>
<dbReference type="InterPro" id="IPR036554">
    <property type="entry name" value="GHMP_kinase_C_sf"/>
</dbReference>
<dbReference type="InterPro" id="IPR006204">
    <property type="entry name" value="GHMP_kinase_N_dom"/>
</dbReference>
<dbReference type="InterPro" id="IPR004424">
    <property type="entry name" value="IspE"/>
</dbReference>
<dbReference type="InterPro" id="IPR020568">
    <property type="entry name" value="Ribosomal_Su5_D2-typ_SF"/>
</dbReference>
<dbReference type="InterPro" id="IPR014721">
    <property type="entry name" value="Ribsml_uS5_D2-typ_fold_subgr"/>
</dbReference>
<dbReference type="NCBIfam" id="TIGR00154">
    <property type="entry name" value="ispE"/>
    <property type="match status" value="1"/>
</dbReference>
<dbReference type="PANTHER" id="PTHR43527">
    <property type="entry name" value="4-DIPHOSPHOCYTIDYL-2-C-METHYL-D-ERYTHRITOL KINASE, CHLOROPLASTIC"/>
    <property type="match status" value="1"/>
</dbReference>
<dbReference type="PANTHER" id="PTHR43527:SF2">
    <property type="entry name" value="4-DIPHOSPHOCYTIDYL-2-C-METHYL-D-ERYTHRITOL KINASE, CHLOROPLASTIC"/>
    <property type="match status" value="1"/>
</dbReference>
<dbReference type="Pfam" id="PF08544">
    <property type="entry name" value="GHMP_kinases_C"/>
    <property type="match status" value="1"/>
</dbReference>
<dbReference type="Pfam" id="PF00288">
    <property type="entry name" value="GHMP_kinases_N"/>
    <property type="match status" value="1"/>
</dbReference>
<dbReference type="PIRSF" id="PIRSF010376">
    <property type="entry name" value="IspE"/>
    <property type="match status" value="1"/>
</dbReference>
<dbReference type="SUPFAM" id="SSF55060">
    <property type="entry name" value="GHMP Kinase, C-terminal domain"/>
    <property type="match status" value="1"/>
</dbReference>
<dbReference type="SUPFAM" id="SSF54211">
    <property type="entry name" value="Ribosomal protein S5 domain 2-like"/>
    <property type="match status" value="1"/>
</dbReference>
<accession>Q4L3F2</accession>
<comment type="function">
    <text evidence="1">Catalyzes the phosphorylation of the position 2 hydroxy group of 4-diphosphocytidyl-2C-methyl-D-erythritol.</text>
</comment>
<comment type="catalytic activity">
    <reaction evidence="1">
        <text>4-CDP-2-C-methyl-D-erythritol + ATP = 4-CDP-2-C-methyl-D-erythritol 2-phosphate + ADP + H(+)</text>
        <dbReference type="Rhea" id="RHEA:18437"/>
        <dbReference type="ChEBI" id="CHEBI:15378"/>
        <dbReference type="ChEBI" id="CHEBI:30616"/>
        <dbReference type="ChEBI" id="CHEBI:57823"/>
        <dbReference type="ChEBI" id="CHEBI:57919"/>
        <dbReference type="ChEBI" id="CHEBI:456216"/>
        <dbReference type="EC" id="2.7.1.148"/>
    </reaction>
</comment>
<comment type="similarity">
    <text evidence="1">Belongs to the GHMP kinase family. IspE subfamily.</text>
</comment>
<sequence>MIYETAPAKINLTLDTLFKRDDGYHEIAMIMTTVDLNDRLSFQKRKDKKIVVDIEHNYVPNDHKNLAYRAAQLMMETYDLNEGVTITIDKDIPVSAGLAGGSADAAATMRGINRLFNLDKSLHELSDLGIQIGTDIPFCIYNRTAVCKGRGEKIRFLKKPPSAWVVLAKPNLGISSADVFKALDLDDAHHVDTEMCEKAIVEGDYKQLCESLSNRLEPVSMSMHPEIKKIKNNMLQCGADGALMSGSGPTVYGLAQKESQAKKIYNAVNGCCNEVYLVRLLG</sequence>
<gene>
    <name type="ordered locus">SH2516</name>
</gene>
<organism>
    <name type="scientific">Staphylococcus haemolyticus (strain JCSC1435)</name>
    <dbReference type="NCBI Taxonomy" id="279808"/>
    <lineage>
        <taxon>Bacteria</taxon>
        <taxon>Bacillati</taxon>
        <taxon>Bacillota</taxon>
        <taxon>Bacilli</taxon>
        <taxon>Bacillales</taxon>
        <taxon>Staphylococcaceae</taxon>
        <taxon>Staphylococcus</taxon>
    </lineage>
</organism>
<keyword id="KW-0067">ATP-binding</keyword>
<keyword id="KW-0418">Kinase</keyword>
<keyword id="KW-0547">Nucleotide-binding</keyword>
<keyword id="KW-0808">Transferase</keyword>
<reference key="1">
    <citation type="journal article" date="2005" name="J. Bacteriol.">
        <title>Whole-genome sequencing of Staphylococcus haemolyticus uncovers the extreme plasticity of its genome and the evolution of human-colonizing staphylococcal species.</title>
        <authorList>
            <person name="Takeuchi F."/>
            <person name="Watanabe S."/>
            <person name="Baba T."/>
            <person name="Yuzawa H."/>
            <person name="Ito T."/>
            <person name="Morimoto Y."/>
            <person name="Kuroda M."/>
            <person name="Cui L."/>
            <person name="Takahashi M."/>
            <person name="Ankai A."/>
            <person name="Baba S."/>
            <person name="Fukui S."/>
            <person name="Lee J.C."/>
            <person name="Hiramatsu K."/>
        </authorList>
    </citation>
    <scope>NUCLEOTIDE SEQUENCE [LARGE SCALE GENOMIC DNA]</scope>
    <source>
        <strain>JCSC1435</strain>
    </source>
</reference>
<name>ISPE_STAHJ</name>
<feature type="chain" id="PRO_0000235136" description="Putative 4-diphosphocytidyl-2-C-methyl-D-erythritol kinase">
    <location>
        <begin position="1"/>
        <end position="282"/>
    </location>
</feature>
<feature type="active site" evidence="1">
    <location>
        <position position="9"/>
    </location>
</feature>
<feature type="active site" evidence="1">
    <location>
        <position position="135"/>
    </location>
</feature>
<feature type="binding site" evidence="1">
    <location>
        <begin position="93"/>
        <end position="103"/>
    </location>
    <ligand>
        <name>ATP</name>
        <dbReference type="ChEBI" id="CHEBI:30616"/>
    </ligand>
</feature>
<proteinExistence type="inferred from homology"/>